<proteinExistence type="inferred from homology"/>
<organism>
    <name type="scientific">Caenorhabditis elegans</name>
    <dbReference type="NCBI Taxonomy" id="6239"/>
    <lineage>
        <taxon>Eukaryota</taxon>
        <taxon>Metazoa</taxon>
        <taxon>Ecdysozoa</taxon>
        <taxon>Nematoda</taxon>
        <taxon>Chromadorea</taxon>
        <taxon>Rhabditida</taxon>
        <taxon>Rhabditina</taxon>
        <taxon>Rhabditomorpha</taxon>
        <taxon>Rhabditoidea</taxon>
        <taxon>Rhabditidae</taxon>
        <taxon>Peloderinae</taxon>
        <taxon>Caenorhabditis</taxon>
    </lineage>
</organism>
<evidence type="ECO:0000250" key="1"/>
<evidence type="ECO:0000250" key="2">
    <source>
        <dbReference type="UniProtKB" id="P39656"/>
    </source>
</evidence>
<evidence type="ECO:0000250" key="3">
    <source>
        <dbReference type="UniProtKB" id="Q05052"/>
    </source>
</evidence>
<evidence type="ECO:0000255" key="4"/>
<evidence type="ECO:0000269" key="5">
    <source>
    </source>
</evidence>
<evidence type="ECO:0000269" key="6">
    <source>
    </source>
</evidence>
<evidence type="ECO:0000305" key="7"/>
<evidence type="ECO:0000312" key="8">
    <source>
        <dbReference type="WormBase" id="T09A5.11"/>
    </source>
</evidence>
<feature type="signal peptide" evidence="4">
    <location>
        <begin position="1"/>
        <end position="20"/>
    </location>
</feature>
<feature type="chain" id="PRO_0000021954" description="Dolichyl-diphosphooligosaccharide--protein glycosyltransferase 48 kDa subunit">
    <location>
        <begin position="21"/>
        <end position="445"/>
    </location>
</feature>
<feature type="topological domain" description="Lumenal" evidence="4">
    <location>
        <begin position="21"/>
        <end position="405"/>
    </location>
</feature>
<feature type="transmembrane region" description="Helical" evidence="4">
    <location>
        <begin position="406"/>
        <end position="426"/>
    </location>
</feature>
<feature type="topological domain" description="Cytoplasmic" evidence="4">
    <location>
        <begin position="427"/>
        <end position="445"/>
    </location>
</feature>
<accession>P45971</accession>
<comment type="function">
    <text evidence="2 3 6">Subunit of the oligosaccharyl transferase (OST) complex that catalyzes the initial transfer of a defined glycan (Glc(3)Man(9)GlcNAc(2) in eukaryotes) from the lipid carrier dolichol-pyrophosphate to an asparagine residue within an Asn-X-Ser/Thr consensus motif in nascent polypeptide chains, the first step in protein N-glycosylation. N-glycosylation occurs cotranslationally and the complex associates with the Sec61 complex at the channel-forming translocon complex that mediates protein translocation across the endoplasmic reticulum (ER). All subunits are required for a maximal enzyme activity (By similarity). Required for the assembly of both SST3A- and SS3B-containing OST complexes (By similarity). Required for normal lifespan (PubMed:36173858).</text>
</comment>
<comment type="pathway">
    <text>Protein modification; protein glycosylation.</text>
</comment>
<comment type="subunit">
    <text evidence="3">Component of the oligosaccharyltransferase (OST) complex.</text>
</comment>
<comment type="subcellular location">
    <subcellularLocation>
        <location evidence="1">Endoplasmic reticulum membrane</location>
        <topology evidence="1">Single-pass type I membrane protein</topology>
    </subcellularLocation>
</comment>
<comment type="disruption phenotype">
    <text evidence="5 6">RNAi-mediated knock-down is mostly embryonic lethal (PubMed:23691084). Embryogenesis proceeds more slowly and embryos are osmo-sensitive (PubMed:23691084). RNAi-mediated knockdown reduces lifespan (PubMed:36173858).</text>
</comment>
<comment type="similarity">
    <text evidence="7">Belongs to the DDOST 48 kDa subunit family.</text>
</comment>
<reference key="1">
    <citation type="journal article" date="1998" name="Science">
        <title>Genome sequence of the nematode C. elegans: a platform for investigating biology.</title>
        <authorList>
            <consortium name="The C. elegans sequencing consortium"/>
        </authorList>
    </citation>
    <scope>NUCLEOTIDE SEQUENCE [LARGE SCALE GENOMIC DNA]</scope>
    <source>
        <strain>Bristol N2</strain>
    </source>
</reference>
<reference key="2">
    <citation type="journal article" date="2013" name="PLoS ONE">
        <title>N-glycosylation is required for secretion and mitosis in C. elegans.</title>
        <authorList>
            <person name="Stevens J."/>
            <person name="Spang A."/>
        </authorList>
    </citation>
    <scope>DISRUPTION PHENOTYPE</scope>
</reference>
<reference evidence="7" key="3">
    <citation type="journal article" date="2022" name="Science">
        <title>Sex- and age-dependent genetics of longevity in a heterogeneous mouse population.</title>
        <authorList>
            <person name="Bou Sleiman M."/>
            <person name="Roy S."/>
            <person name="Gao A.W."/>
            <person name="Sadler M.C."/>
            <person name="von Alvensleben G.V.G."/>
            <person name="Li H."/>
            <person name="Sen S."/>
            <person name="Harrison D.E."/>
            <person name="Nelson J.F."/>
            <person name="Strong R."/>
            <person name="Miller R.A."/>
            <person name="Kutalik Z."/>
            <person name="Williams R.W."/>
            <person name="Auwerx J."/>
        </authorList>
    </citation>
    <scope>FUNCTION</scope>
    <scope>DISRUPTION PHENOTYPE</scope>
</reference>
<protein>
    <recommendedName>
        <fullName>Dolichyl-diphosphooligosaccharide--protein glycosyltransferase 48 kDa subunit</fullName>
        <shortName>Oligosaccharyl transferase 48 kDa subunit</shortName>
    </recommendedName>
    <alternativeName>
        <fullName evidence="8">Oligosaccharyl transferase beta subunit 1</fullName>
    </alternativeName>
</protein>
<sequence>MRWLPGLLLIASIGFHQSLADRVLVLGETAAVKDTHSVFLNSVKERGHELTVRAADDSQLALFKHGQLIFDHLFILAPGVQVFGGSLSPSEISKFVDAGGNVLVAAGSNIGDALREIAAEHGFEFEEAGTSVIDHHNYDQTLDSGDHTTLVVGKDQLISAELIVGNSAKLHPVLFKGIGLVAGKTNNLALSIVRASGTAYSYDPKAVRATNPSIAGSRTLLVGGLQSRNNARIVFTGSSELFSNTFFSAKTNSVNPSVQGAQSGNADFATAITRWVMKESGVLRVKTVNHHKKGETVPPVEGYFITEDVVYTIEIEELKNGKWVPFQGKDVQLEFVRIDPFVRATLKNSNGRLSVAFKLPDVLGVFKFLVDYRRVGYTHLYDVQQVSVRPLWHTQYERFIRSAYPYYASSFSMMAGLVLFSIVYLYHKDTPVKGAKVLDSEKKKN</sequence>
<gene>
    <name evidence="8" type="primary">ostb-1</name>
    <name evidence="8" type="ORF">T09A5.11</name>
</gene>
<dbReference type="EMBL" id="Z36753">
    <property type="protein sequence ID" value="CAA85337.1"/>
    <property type="molecule type" value="Genomic_DNA"/>
</dbReference>
<dbReference type="PIR" id="T24723">
    <property type="entry name" value="T24723"/>
</dbReference>
<dbReference type="RefSeq" id="NP_495655.1">
    <property type="nucleotide sequence ID" value="NM_063254.9"/>
</dbReference>
<dbReference type="SMR" id="P45971"/>
<dbReference type="BioGRID" id="39601">
    <property type="interactions" value="26"/>
</dbReference>
<dbReference type="ComplexPortal" id="CPX-968">
    <property type="entry name" value="Oligosaccharyltransferase complex"/>
</dbReference>
<dbReference type="FunCoup" id="P45971">
    <property type="interactions" value="2620"/>
</dbReference>
<dbReference type="STRING" id="6239.T09A5.11.2"/>
<dbReference type="PaxDb" id="6239-T09A5.11.2"/>
<dbReference type="PeptideAtlas" id="P45971"/>
<dbReference type="EnsemblMetazoa" id="T09A5.11.1">
    <property type="protein sequence ID" value="T09A5.11.1"/>
    <property type="gene ID" value="WBGene00011638"/>
</dbReference>
<dbReference type="GeneID" id="174268"/>
<dbReference type="KEGG" id="cel:CELE_T09A5.11"/>
<dbReference type="UCSC" id="T09A5.11.2">
    <property type="organism name" value="c. elegans"/>
</dbReference>
<dbReference type="AGR" id="WB:WBGene00011638"/>
<dbReference type="CTD" id="174268"/>
<dbReference type="WormBase" id="T09A5.11">
    <property type="protein sequence ID" value="CE01081"/>
    <property type="gene ID" value="WBGene00011638"/>
    <property type="gene designation" value="ostb-1"/>
</dbReference>
<dbReference type="eggNOG" id="KOG2754">
    <property type="taxonomic scope" value="Eukaryota"/>
</dbReference>
<dbReference type="GeneTree" id="ENSGT00390000017294"/>
<dbReference type="HOGENOM" id="CLU_031804_0_0_1"/>
<dbReference type="InParanoid" id="P45971"/>
<dbReference type="OMA" id="AHDEYPR"/>
<dbReference type="OrthoDB" id="29105at2759"/>
<dbReference type="PhylomeDB" id="P45971"/>
<dbReference type="Reactome" id="R-CEL-6798695">
    <property type="pathway name" value="Neutrophil degranulation"/>
</dbReference>
<dbReference type="UniPathway" id="UPA00378"/>
<dbReference type="PRO" id="PR:P45971"/>
<dbReference type="Proteomes" id="UP000001940">
    <property type="component" value="Chromosome II"/>
</dbReference>
<dbReference type="Bgee" id="WBGene00011638">
    <property type="expression patterns" value="Expressed in embryo and 4 other cell types or tissues"/>
</dbReference>
<dbReference type="GO" id="GO:0008250">
    <property type="term" value="C:oligosaccharyltransferase complex"/>
    <property type="evidence" value="ECO:0000318"/>
    <property type="project" value="GO_Central"/>
</dbReference>
<dbReference type="GO" id="GO:0036498">
    <property type="term" value="P:IRE1-mediated unfolded protein response"/>
    <property type="evidence" value="ECO:0007007"/>
    <property type="project" value="WormBase"/>
</dbReference>
<dbReference type="GO" id="GO:0006487">
    <property type="term" value="P:protein N-linked glycosylation"/>
    <property type="evidence" value="ECO:0000303"/>
    <property type="project" value="ComplexPortal"/>
</dbReference>
<dbReference type="GO" id="GO:0018279">
    <property type="term" value="P:protein N-linked glycosylation via asparagine"/>
    <property type="evidence" value="ECO:0000318"/>
    <property type="project" value="GO_Central"/>
</dbReference>
<dbReference type="InterPro" id="IPR005013">
    <property type="entry name" value="DDOST_48_kDa_subunit"/>
</dbReference>
<dbReference type="InterPro" id="IPR055459">
    <property type="entry name" value="OST48_MD"/>
</dbReference>
<dbReference type="InterPro" id="IPR055457">
    <property type="entry name" value="OST48_N"/>
</dbReference>
<dbReference type="PANTHER" id="PTHR10830">
    <property type="entry name" value="DOLICHYL-DIPHOSPHOOLIGOSACCHARIDE--PROTEIN GLYCOSYLTRANSFERASE 48 KDA SUBUNIT"/>
    <property type="match status" value="1"/>
</dbReference>
<dbReference type="PANTHER" id="PTHR10830:SF0">
    <property type="entry name" value="DOLICHYL-DIPHOSPHOOLIGOSACCHARIDE--PROTEIN GLYCOSYLTRANSFERASE 48 KDA SUBUNIT"/>
    <property type="match status" value="1"/>
</dbReference>
<dbReference type="Pfam" id="PF23358">
    <property type="entry name" value="OST48_MD"/>
    <property type="match status" value="1"/>
</dbReference>
<dbReference type="Pfam" id="PF03345">
    <property type="entry name" value="OST48_N"/>
    <property type="match status" value="1"/>
</dbReference>
<keyword id="KW-0256">Endoplasmic reticulum</keyword>
<keyword id="KW-0472">Membrane</keyword>
<keyword id="KW-1185">Reference proteome</keyword>
<keyword id="KW-0732">Signal</keyword>
<keyword id="KW-0812">Transmembrane</keyword>
<keyword id="KW-1133">Transmembrane helix</keyword>
<name>OST48_CAEEL</name>